<protein>
    <recommendedName>
        <fullName>Heat shock 70 kDa protein 6</fullName>
    </recommendedName>
    <alternativeName>
        <fullName>Heat shock 70 kDa protein B'</fullName>
    </alternativeName>
</protein>
<dbReference type="EMBL" id="X68213">
    <property type="protein sequence ID" value="CAA48295.1"/>
    <property type="molecule type" value="mRNA"/>
</dbReference>
<dbReference type="PIR" id="S34625">
    <property type="entry name" value="S25585"/>
</dbReference>
<dbReference type="RefSeq" id="NP_001116599.1">
    <property type="nucleotide sequence ID" value="NM_001123127.1"/>
</dbReference>
<dbReference type="SMR" id="Q04967"/>
<dbReference type="ELM" id="Q04967"/>
<dbReference type="FunCoup" id="Q04967">
    <property type="interactions" value="444"/>
</dbReference>
<dbReference type="IntAct" id="Q04967">
    <property type="interactions" value="1"/>
</dbReference>
<dbReference type="STRING" id="9823.ENSSSCP00000073047"/>
<dbReference type="PeptideAtlas" id="Q04967"/>
<dbReference type="GeneID" id="396906"/>
<dbReference type="KEGG" id="ssc:396906"/>
<dbReference type="CTD" id="3310"/>
<dbReference type="InParanoid" id="Q04967"/>
<dbReference type="OrthoDB" id="2401965at2759"/>
<dbReference type="PRO" id="PR:Q04967"/>
<dbReference type="Proteomes" id="UP000008227">
    <property type="component" value="Unplaced"/>
</dbReference>
<dbReference type="Proteomes" id="UP000314985">
    <property type="component" value="Unplaced"/>
</dbReference>
<dbReference type="Proteomes" id="UP000694570">
    <property type="component" value="Unplaced"/>
</dbReference>
<dbReference type="Proteomes" id="UP000694571">
    <property type="component" value="Unplaced"/>
</dbReference>
<dbReference type="Proteomes" id="UP000694720">
    <property type="component" value="Unplaced"/>
</dbReference>
<dbReference type="Proteomes" id="UP000694722">
    <property type="component" value="Unplaced"/>
</dbReference>
<dbReference type="Proteomes" id="UP000694723">
    <property type="component" value="Unplaced"/>
</dbReference>
<dbReference type="Proteomes" id="UP000694724">
    <property type="component" value="Unplaced"/>
</dbReference>
<dbReference type="Proteomes" id="UP000694725">
    <property type="component" value="Unplaced"/>
</dbReference>
<dbReference type="Proteomes" id="UP000694726">
    <property type="component" value="Unplaced"/>
</dbReference>
<dbReference type="Proteomes" id="UP000694727">
    <property type="component" value="Unplaced"/>
</dbReference>
<dbReference type="Proteomes" id="UP000694728">
    <property type="component" value="Unplaced"/>
</dbReference>
<dbReference type="GO" id="GO:0005737">
    <property type="term" value="C:cytoplasm"/>
    <property type="evidence" value="ECO:0000318"/>
    <property type="project" value="GO_Central"/>
</dbReference>
<dbReference type="GO" id="GO:0005829">
    <property type="term" value="C:cytosol"/>
    <property type="evidence" value="ECO:0000318"/>
    <property type="project" value="GO_Central"/>
</dbReference>
<dbReference type="GO" id="GO:0005634">
    <property type="term" value="C:nucleus"/>
    <property type="evidence" value="ECO:0000318"/>
    <property type="project" value="GO_Central"/>
</dbReference>
<dbReference type="GO" id="GO:0005886">
    <property type="term" value="C:plasma membrane"/>
    <property type="evidence" value="ECO:0000318"/>
    <property type="project" value="GO_Central"/>
</dbReference>
<dbReference type="GO" id="GO:0005524">
    <property type="term" value="F:ATP binding"/>
    <property type="evidence" value="ECO:0007669"/>
    <property type="project" value="UniProtKB-KW"/>
</dbReference>
<dbReference type="GO" id="GO:0016887">
    <property type="term" value="F:ATP hydrolysis activity"/>
    <property type="evidence" value="ECO:0000318"/>
    <property type="project" value="GO_Central"/>
</dbReference>
<dbReference type="GO" id="GO:0140662">
    <property type="term" value="F:ATP-dependent protein folding chaperone"/>
    <property type="evidence" value="ECO:0007669"/>
    <property type="project" value="InterPro"/>
</dbReference>
<dbReference type="GO" id="GO:0031072">
    <property type="term" value="F:heat shock protein binding"/>
    <property type="evidence" value="ECO:0000318"/>
    <property type="project" value="GO_Central"/>
</dbReference>
<dbReference type="GO" id="GO:0044183">
    <property type="term" value="F:protein folding chaperone"/>
    <property type="evidence" value="ECO:0000318"/>
    <property type="project" value="GO_Central"/>
</dbReference>
<dbReference type="GO" id="GO:0051085">
    <property type="term" value="P:chaperone cofactor-dependent protein refolding"/>
    <property type="evidence" value="ECO:0000318"/>
    <property type="project" value="GO_Central"/>
</dbReference>
<dbReference type="GO" id="GO:0042026">
    <property type="term" value="P:protein refolding"/>
    <property type="evidence" value="ECO:0000318"/>
    <property type="project" value="GO_Central"/>
</dbReference>
<dbReference type="CDD" id="cd10233">
    <property type="entry name" value="ASKHA_NBD_HSP70_HSPA1"/>
    <property type="match status" value="1"/>
</dbReference>
<dbReference type="FunFam" id="2.60.34.10:FF:000002">
    <property type="entry name" value="Heat shock 70 kDa"/>
    <property type="match status" value="1"/>
</dbReference>
<dbReference type="FunFam" id="3.30.420.40:FF:000172">
    <property type="entry name" value="Heat shock 70 kDa protein"/>
    <property type="match status" value="1"/>
</dbReference>
<dbReference type="FunFam" id="1.20.1270.10:FF:000033">
    <property type="entry name" value="heat shock 70 kDa protein 6"/>
    <property type="match status" value="1"/>
</dbReference>
<dbReference type="FunFam" id="3.30.30.30:FF:000001">
    <property type="entry name" value="heat shock 70 kDa protein-like"/>
    <property type="match status" value="1"/>
</dbReference>
<dbReference type="FunFam" id="3.30.420.40:FF:000135">
    <property type="entry name" value="Heat shock cognate 71 kDa protein"/>
    <property type="match status" value="1"/>
</dbReference>
<dbReference type="FunFam" id="3.90.640.10:FF:000134">
    <property type="entry name" value="Heat shock cognate 71 kDa protein"/>
    <property type="match status" value="1"/>
</dbReference>
<dbReference type="FunFam" id="3.30.420.40:FF:000026">
    <property type="entry name" value="Heat shock protein 70"/>
    <property type="match status" value="1"/>
</dbReference>
<dbReference type="Gene3D" id="1.20.1270.10">
    <property type="match status" value="1"/>
</dbReference>
<dbReference type="Gene3D" id="3.30.30.30">
    <property type="match status" value="1"/>
</dbReference>
<dbReference type="Gene3D" id="3.30.420.40">
    <property type="match status" value="2"/>
</dbReference>
<dbReference type="Gene3D" id="3.90.640.10">
    <property type="entry name" value="Actin, Chain A, domain 4"/>
    <property type="match status" value="1"/>
</dbReference>
<dbReference type="Gene3D" id="2.60.34.10">
    <property type="entry name" value="Substrate Binding Domain Of DNAk, Chain A, domain 1"/>
    <property type="match status" value="1"/>
</dbReference>
<dbReference type="InterPro" id="IPR043129">
    <property type="entry name" value="ATPase_NBD"/>
</dbReference>
<dbReference type="InterPro" id="IPR018181">
    <property type="entry name" value="Heat_shock_70_CS"/>
</dbReference>
<dbReference type="InterPro" id="IPR029048">
    <property type="entry name" value="HSP70_C_sf"/>
</dbReference>
<dbReference type="InterPro" id="IPR029047">
    <property type="entry name" value="HSP70_peptide-bd_sf"/>
</dbReference>
<dbReference type="InterPro" id="IPR013126">
    <property type="entry name" value="Hsp_70_fam"/>
</dbReference>
<dbReference type="NCBIfam" id="NF001413">
    <property type="entry name" value="PRK00290.1"/>
    <property type="match status" value="1"/>
</dbReference>
<dbReference type="PANTHER" id="PTHR19375">
    <property type="entry name" value="HEAT SHOCK PROTEIN 70KDA"/>
    <property type="match status" value="1"/>
</dbReference>
<dbReference type="Pfam" id="PF00012">
    <property type="entry name" value="HSP70"/>
    <property type="match status" value="1"/>
</dbReference>
<dbReference type="PRINTS" id="PR00301">
    <property type="entry name" value="HEATSHOCK70"/>
</dbReference>
<dbReference type="SUPFAM" id="SSF53067">
    <property type="entry name" value="Actin-like ATPase domain"/>
    <property type="match status" value="2"/>
</dbReference>
<dbReference type="SUPFAM" id="SSF100934">
    <property type="entry name" value="Heat shock protein 70kD (HSP70), C-terminal subdomain"/>
    <property type="match status" value="1"/>
</dbReference>
<dbReference type="SUPFAM" id="SSF100920">
    <property type="entry name" value="Heat shock protein 70kD (HSP70), peptide-binding domain"/>
    <property type="match status" value="1"/>
</dbReference>
<dbReference type="PROSITE" id="PS00297">
    <property type="entry name" value="HSP70_1"/>
    <property type="match status" value="1"/>
</dbReference>
<dbReference type="PROSITE" id="PS00329">
    <property type="entry name" value="HSP70_2"/>
    <property type="match status" value="1"/>
</dbReference>
<dbReference type="PROSITE" id="PS01036">
    <property type="entry name" value="HSP70_3"/>
    <property type="match status" value="1"/>
</dbReference>
<accession>Q04967</accession>
<organism>
    <name type="scientific">Sus scrofa</name>
    <name type="common">Pig</name>
    <dbReference type="NCBI Taxonomy" id="9823"/>
    <lineage>
        <taxon>Eukaryota</taxon>
        <taxon>Metazoa</taxon>
        <taxon>Chordata</taxon>
        <taxon>Craniata</taxon>
        <taxon>Vertebrata</taxon>
        <taxon>Euteleostomi</taxon>
        <taxon>Mammalia</taxon>
        <taxon>Eutheria</taxon>
        <taxon>Laurasiatheria</taxon>
        <taxon>Artiodactyla</taxon>
        <taxon>Suina</taxon>
        <taxon>Suidae</taxon>
        <taxon>Sus</taxon>
    </lineage>
</organism>
<gene>
    <name type="primary">HSPA6</name>
    <name type="synonym">HSP70B'</name>
</gene>
<proteinExistence type="evidence at protein level"/>
<evidence type="ECO:0000250" key="1"/>
<evidence type="ECO:0000250" key="2">
    <source>
        <dbReference type="UniProtKB" id="P11142"/>
    </source>
</evidence>
<evidence type="ECO:0000250" key="3">
    <source>
        <dbReference type="UniProtKB" id="P17066"/>
    </source>
</evidence>
<evidence type="ECO:0000256" key="4">
    <source>
        <dbReference type="SAM" id="MobiDB-lite"/>
    </source>
</evidence>
<evidence type="ECO:0000305" key="5"/>
<feature type="chain" id="PRO_0000078265" description="Heat shock 70 kDa protein 6">
    <location>
        <begin position="1"/>
        <end position="643"/>
    </location>
</feature>
<feature type="region of interest" description="Nucleotide-binding domain (NBD)" evidence="2">
    <location>
        <begin position="3"/>
        <end position="388"/>
    </location>
</feature>
<feature type="region of interest" description="Substrate-binding domain (SBD)" evidence="2">
    <location>
        <begin position="396"/>
        <end position="511"/>
    </location>
</feature>
<feature type="region of interest" description="Disordered" evidence="4">
    <location>
        <begin position="620"/>
        <end position="643"/>
    </location>
</feature>
<feature type="binding site" evidence="1">
    <location>
        <begin position="14"/>
        <end position="17"/>
    </location>
    <ligand>
        <name>ATP</name>
        <dbReference type="ChEBI" id="CHEBI:30616"/>
    </ligand>
</feature>
<feature type="binding site" evidence="1">
    <location>
        <position position="73"/>
    </location>
    <ligand>
        <name>ATP</name>
        <dbReference type="ChEBI" id="CHEBI:30616"/>
    </ligand>
</feature>
<feature type="binding site" evidence="1">
    <location>
        <begin position="204"/>
        <end position="206"/>
    </location>
    <ligand>
        <name>ATP</name>
        <dbReference type="ChEBI" id="CHEBI:30616"/>
    </ligand>
</feature>
<feature type="binding site" evidence="1">
    <location>
        <begin position="270"/>
        <end position="277"/>
    </location>
    <ligand>
        <name>ATP</name>
        <dbReference type="ChEBI" id="CHEBI:30616"/>
    </ligand>
</feature>
<feature type="binding site" evidence="1">
    <location>
        <begin position="341"/>
        <end position="344"/>
    </location>
    <ligand>
        <name>ATP</name>
        <dbReference type="ChEBI" id="CHEBI:30616"/>
    </ligand>
</feature>
<feature type="modified residue" description="N6,N6,N6-trimethyllysine; by METTL21A; in vitro" evidence="3">
    <location>
        <position position="563"/>
    </location>
</feature>
<comment type="function">
    <text evidence="3">Molecular chaperone implicated in a wide variety of cellular processes, including protection of the proteome from stress, folding and transport of newly synthesized polypeptides, activation of proteolysis of misfolded proteins and the formation and dissociation of protein complexes. Plays a pivotal role in the protein quality control system, ensuring the correct folding of proteins, the re-folding of misfolded proteins and controlling the targeting of proteins for subsequent degradation. This is achieved through cycles of ATP binding, ATP hydrolysis and ADP release, mediated by co-chaperones. The affinity for polypeptides is regulated by its nucleotide bound state. In the ATP-bound form, it has a low affinity for substrate proteins. However, upon hydrolysis of the ATP to ADP, it undergoes a conformational change that increases its affinity for substrate proteins. It goes through repeated cycles of ATP hydrolysis and nucleotide exchange, which permits cycles of substrate binding and release.</text>
</comment>
<comment type="interaction">
    <interactant intactId="EBI-12556695">
        <id>Q04967</id>
    </interactant>
    <interactant intactId="EBI-12556408">
        <id>B1PVV8</id>
    </interactant>
    <organismsDiffer>true</organismsDiffer>
    <experiments>5</experiments>
</comment>
<comment type="induction">
    <text>By heat shock.</text>
</comment>
<comment type="domain">
    <text evidence="3">The N-terminal nucleotide binding domain (NBD) (also known as the ATPase domain) is responsible for binding and hydrolyzing ATP. The C-terminal substrate-binding domain (SBD) (also known as peptide-binding domain) binds to the client/substrate proteins. The two domains are allosterically coupled so that, when ATP is bound to the NBD, the SBD binds relatively weakly to clients. When ADP is bound in the NBD, a conformational change enhances the affinity of the SBD for client proteins.</text>
</comment>
<comment type="similarity">
    <text evidence="5">Belongs to the heat shock protein 70 family.</text>
</comment>
<sequence>MSAAREVAIGIDLGTTYSCVGVFQHGRVEILANDQGNRTTPSYVAFTDTERLVGDAAKSQAALNPQNTVFDAKRLIGRKFADPTVQSDLKHWPFQVVSEGGKPKVRVSYRGEDKAFYPEEISSMVLSKMKETAEAYLGQPVRHAVITVPAYFNDSQRQATKDAGAIAGLNVLRIINEPTAAAIAYGLDRRGAGERNVLIFDLGGGTFDVSVLTIDAGVFEVKATAGDTHLGGEDFDNRLVNHFMEEFRRKHRKDLSRNKRALRRLRTACERAKRTLSSSTQATLEIDSLFEGVDFYTSITRARFEELCSDLFRSTLEPVEKALRDAKLDKAQIHDIVLVGGSTRIPKIQKLLQDFFNGRELNKSINPDEAVAYGAAVQAAVLMGDKCEKVQDLLLLDVAPLSLGLETAGGVMTTLIQRNATIPTKQTQTFTTYSDNQPGVLIQVYEGERAMTRDNNLLGRFELSGIPPAPRGVPQIEVTFDIDANGILSVTATDRSTGRANKITITNDKGRLSKEEVERMVREADEYKVEDEAQRDRVAAKNSLEAYVFHVKGSLHEESLRDKIPEEDRCKVQDKCQEVLTWLEHNQLAEKEEYEHQKRELEQICRPIFSRLYGAPGIPGGSSCGAQARQGAPSTGPVIEEVD</sequence>
<keyword id="KW-0067">ATP-binding</keyword>
<keyword id="KW-0488">Methylation</keyword>
<keyword id="KW-0547">Nucleotide-binding</keyword>
<keyword id="KW-1185">Reference proteome</keyword>
<keyword id="KW-0346">Stress response</keyword>
<name>HSP76_PIG</name>
<reference key="1">
    <citation type="journal article" date="1993" name="Biochim. Biophys. Acta">
        <title>Characterization of a polymorphic heat shock protein 70 gene in swine outside the SLA major histocompatibility complex.</title>
        <authorList>
            <person name="Dezeure F."/>
            <person name="Vaiman M."/>
            <person name="Chardon P."/>
        </authorList>
    </citation>
    <scope>NUCLEOTIDE SEQUENCE [MRNA]</scope>
    <source>
        <tissue>Lymphocyte</tissue>
    </source>
</reference>